<protein>
    <recommendedName>
        <fullName>Conotoxin VnMMSK-01</fullName>
    </recommendedName>
</protein>
<organism>
    <name type="scientific">Conus ventricosus</name>
    <name type="common">Mediterranean cone</name>
    <dbReference type="NCBI Taxonomy" id="117992"/>
    <lineage>
        <taxon>Eukaryota</taxon>
        <taxon>Metazoa</taxon>
        <taxon>Spiralia</taxon>
        <taxon>Lophotrochozoa</taxon>
        <taxon>Mollusca</taxon>
        <taxon>Gastropoda</taxon>
        <taxon>Caenogastropoda</taxon>
        <taxon>Neogastropoda</taxon>
        <taxon>Conoidea</taxon>
        <taxon>Conidae</taxon>
        <taxon>Conus</taxon>
        <taxon>Lautoconus</taxon>
    </lineage>
</organism>
<proteinExistence type="evidence at transcript level"/>
<reference key="1">
    <citation type="journal article" date="2001" name="Mol. Biol. Evol.">
        <title>Mechanisms for evolving hypervariability: the case of conopeptides.</title>
        <authorList>
            <person name="Conticello S.G."/>
            <person name="Gilad Y."/>
            <person name="Avidan N."/>
            <person name="Ben-Asher E."/>
            <person name="Levy Z."/>
            <person name="Fainzilber M."/>
        </authorList>
    </citation>
    <scope>NUCLEOTIDE SEQUENCE [MRNA]</scope>
    <source>
        <tissue>Venom duct</tissue>
    </source>
</reference>
<feature type="signal peptide" evidence="3">
    <location>
        <begin position="1"/>
        <end position="20"/>
    </location>
</feature>
<feature type="propeptide" id="PRO_0000404894" evidence="1">
    <location>
        <begin position="21"/>
        <end position="50"/>
    </location>
</feature>
<feature type="peptide" id="PRO_0000404895" description="Conotoxin VnMMSK-01">
    <location>
        <begin position="53"/>
        <end position="68"/>
    </location>
</feature>
<feature type="modified residue" description="4-hydroxyproline" evidence="1">
    <location>
        <position position="63"/>
    </location>
</feature>
<feature type="disulfide bond" evidence="2">
    <location>
        <begin position="53"/>
        <end position="65"/>
    </location>
</feature>
<feature type="disulfide bond" evidence="2">
    <location>
        <begin position="54"/>
        <end position="61"/>
    </location>
</feature>
<feature type="disulfide bond" evidence="2">
    <location>
        <begin position="58"/>
        <end position="64"/>
    </location>
</feature>
<keyword id="KW-0165">Cleavage on pair of basic residues</keyword>
<keyword id="KW-1015">Disulfide bond</keyword>
<keyword id="KW-0379">Hydroxylation</keyword>
<keyword id="KW-0528">Neurotoxin</keyword>
<keyword id="KW-0964">Secreted</keyword>
<keyword id="KW-0732">Signal</keyword>
<keyword id="KW-0800">Toxin</keyword>
<sequence>MMSKLGVLLTICLLLFPLTAVPMDGDQPADLPALRTQDFEPERSPWFDPVRRCCSQDCSVCIPCCPPP</sequence>
<dbReference type="EMBL" id="AF214935">
    <property type="protein sequence ID" value="AAG60363.1"/>
    <property type="molecule type" value="mRNA"/>
</dbReference>
<dbReference type="ConoServer" id="622">
    <property type="toxin name" value="Vn3.2 precursor"/>
</dbReference>
<dbReference type="GO" id="GO:0005576">
    <property type="term" value="C:extracellular region"/>
    <property type="evidence" value="ECO:0007669"/>
    <property type="project" value="UniProtKB-SubCell"/>
</dbReference>
<dbReference type="GO" id="GO:0008200">
    <property type="term" value="F:ion channel inhibitor activity"/>
    <property type="evidence" value="ECO:0007669"/>
    <property type="project" value="InterPro"/>
</dbReference>
<dbReference type="GO" id="GO:0090729">
    <property type="term" value="F:toxin activity"/>
    <property type="evidence" value="ECO:0007669"/>
    <property type="project" value="UniProtKB-KW"/>
</dbReference>
<dbReference type="InterPro" id="IPR004214">
    <property type="entry name" value="Conotoxin"/>
</dbReference>
<dbReference type="Pfam" id="PF02950">
    <property type="entry name" value="Conotoxin"/>
    <property type="match status" value="1"/>
</dbReference>
<comment type="subcellular location">
    <subcellularLocation>
        <location evidence="1">Secreted</location>
    </subcellularLocation>
</comment>
<comment type="tissue specificity">
    <text>Expressed by the venom duct.</text>
</comment>
<comment type="domain">
    <text>The cysteine framework is III (CC-C-C-CC). Classified in the M-2 branch, since 2 residues stand between the fourth and the fifth cysteine residues.</text>
</comment>
<comment type="similarity">
    <text evidence="4">Belongs to the conotoxin M superfamily.</text>
</comment>
<accession>Q9BPI9</accession>
<evidence type="ECO:0000250" key="1"/>
<evidence type="ECO:0000250" key="2">
    <source>
        <dbReference type="UniProtKB" id="P0CI24"/>
    </source>
</evidence>
<evidence type="ECO:0000255" key="3"/>
<evidence type="ECO:0000305" key="4"/>
<name>M232_CONVE</name>